<dbReference type="EMBL" id="BX908798">
    <property type="protein sequence ID" value="CAF23375.1"/>
    <property type="molecule type" value="Genomic_DNA"/>
</dbReference>
<dbReference type="RefSeq" id="WP_011175201.1">
    <property type="nucleotide sequence ID" value="NC_005861.2"/>
</dbReference>
<dbReference type="SMR" id="Q6MDH4"/>
<dbReference type="STRING" id="264201.pc0651"/>
<dbReference type="KEGG" id="pcu:PC_RS03120"/>
<dbReference type="eggNOG" id="COG0254">
    <property type="taxonomic scope" value="Bacteria"/>
</dbReference>
<dbReference type="HOGENOM" id="CLU_114306_2_0_0"/>
<dbReference type="OrthoDB" id="9803251at2"/>
<dbReference type="Proteomes" id="UP000000529">
    <property type="component" value="Chromosome"/>
</dbReference>
<dbReference type="GO" id="GO:1990904">
    <property type="term" value="C:ribonucleoprotein complex"/>
    <property type="evidence" value="ECO:0007669"/>
    <property type="project" value="UniProtKB-KW"/>
</dbReference>
<dbReference type="GO" id="GO:0005840">
    <property type="term" value="C:ribosome"/>
    <property type="evidence" value="ECO:0007669"/>
    <property type="project" value="UniProtKB-KW"/>
</dbReference>
<dbReference type="GO" id="GO:0003735">
    <property type="term" value="F:structural constituent of ribosome"/>
    <property type="evidence" value="ECO:0007669"/>
    <property type="project" value="InterPro"/>
</dbReference>
<dbReference type="GO" id="GO:0006412">
    <property type="term" value="P:translation"/>
    <property type="evidence" value="ECO:0007669"/>
    <property type="project" value="UniProtKB-UniRule"/>
</dbReference>
<dbReference type="Gene3D" id="4.10.830.30">
    <property type="entry name" value="Ribosomal protein L31"/>
    <property type="match status" value="1"/>
</dbReference>
<dbReference type="HAMAP" id="MF_00502">
    <property type="entry name" value="Ribosomal_bL31_2"/>
    <property type="match status" value="1"/>
</dbReference>
<dbReference type="InterPro" id="IPR034704">
    <property type="entry name" value="Ribosomal_bL28/bL31-like_sf"/>
</dbReference>
<dbReference type="InterPro" id="IPR002150">
    <property type="entry name" value="Ribosomal_bL31"/>
</dbReference>
<dbReference type="InterPro" id="IPR027493">
    <property type="entry name" value="Ribosomal_bL31_B"/>
</dbReference>
<dbReference type="InterPro" id="IPR042105">
    <property type="entry name" value="Ribosomal_bL31_sf"/>
</dbReference>
<dbReference type="NCBIfam" id="TIGR00105">
    <property type="entry name" value="L31"/>
    <property type="match status" value="1"/>
</dbReference>
<dbReference type="NCBIfam" id="NF002462">
    <property type="entry name" value="PRK01678.1"/>
    <property type="match status" value="1"/>
</dbReference>
<dbReference type="PANTHER" id="PTHR33280">
    <property type="entry name" value="50S RIBOSOMAL PROTEIN L31, CHLOROPLASTIC"/>
    <property type="match status" value="1"/>
</dbReference>
<dbReference type="PANTHER" id="PTHR33280:SF1">
    <property type="entry name" value="LARGE RIBOSOMAL SUBUNIT PROTEIN BL31C"/>
    <property type="match status" value="1"/>
</dbReference>
<dbReference type="Pfam" id="PF01197">
    <property type="entry name" value="Ribosomal_L31"/>
    <property type="match status" value="1"/>
</dbReference>
<dbReference type="PRINTS" id="PR01249">
    <property type="entry name" value="RIBOSOMALL31"/>
</dbReference>
<dbReference type="SUPFAM" id="SSF143800">
    <property type="entry name" value="L28p-like"/>
    <property type="match status" value="1"/>
</dbReference>
<dbReference type="PROSITE" id="PS01143">
    <property type="entry name" value="RIBOSOMAL_L31"/>
    <property type="match status" value="1"/>
</dbReference>
<accession>Q6MDH4</accession>
<keyword id="KW-1185">Reference proteome</keyword>
<keyword id="KW-0687">Ribonucleoprotein</keyword>
<keyword id="KW-0689">Ribosomal protein</keyword>
<feature type="chain" id="PRO_0000173243" description="Large ribosomal subunit protein bL31B">
    <location>
        <begin position="1"/>
        <end position="117"/>
    </location>
</feature>
<feature type="region of interest" description="Disordered" evidence="2">
    <location>
        <begin position="75"/>
        <end position="117"/>
    </location>
</feature>
<feature type="compositionally biased region" description="Basic and acidic residues" evidence="2">
    <location>
        <begin position="100"/>
        <end position="109"/>
    </location>
</feature>
<name>RL31B_PARUW</name>
<organism>
    <name type="scientific">Protochlamydia amoebophila (strain UWE25)</name>
    <dbReference type="NCBI Taxonomy" id="264201"/>
    <lineage>
        <taxon>Bacteria</taxon>
        <taxon>Pseudomonadati</taxon>
        <taxon>Chlamydiota</taxon>
        <taxon>Chlamydiia</taxon>
        <taxon>Parachlamydiales</taxon>
        <taxon>Parachlamydiaceae</taxon>
        <taxon>Candidatus Protochlamydia</taxon>
    </lineage>
</organism>
<evidence type="ECO:0000255" key="1">
    <source>
        <dbReference type="HAMAP-Rule" id="MF_00502"/>
    </source>
</evidence>
<evidence type="ECO:0000256" key="2">
    <source>
        <dbReference type="SAM" id="MobiDB-lite"/>
    </source>
</evidence>
<evidence type="ECO:0000305" key="3"/>
<protein>
    <recommendedName>
        <fullName evidence="1">Large ribosomal subunit protein bL31B</fullName>
    </recommendedName>
    <alternativeName>
        <fullName evidence="3">50S ribosomal protein L31 type B</fullName>
    </alternativeName>
</protein>
<gene>
    <name evidence="1" type="primary">rpmE2</name>
    <name type="synonym">rl31</name>
    <name type="synonym">rpmE</name>
    <name type="ordered locus">pc0651</name>
</gene>
<proteinExistence type="inferred from homology"/>
<sequence length="117" mass="13074">MKKNTHPQYQKVLFIDSASGHRFVCGSTLKPDATEKFEGVEYPVSYLSISSSSHPFFTGSKQLVDSEGRVEKFKKRFERKKEASPADTPPESDSTTENASVEKKAEKKRVTAKGSKK</sequence>
<reference key="1">
    <citation type="journal article" date="2004" name="Science">
        <title>Illuminating the evolutionary history of chlamydiae.</title>
        <authorList>
            <person name="Horn M."/>
            <person name="Collingro A."/>
            <person name="Schmitz-Esser S."/>
            <person name="Beier C.L."/>
            <person name="Purkhold U."/>
            <person name="Fartmann B."/>
            <person name="Brandt P."/>
            <person name="Nyakatura G.J."/>
            <person name="Droege M."/>
            <person name="Frishman D."/>
            <person name="Rattei T."/>
            <person name="Mewes H.-W."/>
            <person name="Wagner M."/>
        </authorList>
    </citation>
    <scope>NUCLEOTIDE SEQUENCE [LARGE SCALE GENOMIC DNA]</scope>
    <source>
        <strain>UWE25</strain>
    </source>
</reference>
<comment type="subunit">
    <text evidence="1">Part of the 50S ribosomal subunit.</text>
</comment>
<comment type="similarity">
    <text evidence="1">Belongs to the bacterial ribosomal protein bL31 family. Type B subfamily.</text>
</comment>